<sequence>MKLNISFPATGCQKLIEVDDERKLRTFYEKRMATEVAADALGEEWKGYVVRISGGNDKQGFPMKQGVLTHGRVRLLLSKGHSCYRPRRTGERKRKSVRGCIVDANLSVLNLVIVKKGEKDIPGLTDTTVPRRLGPKRASRIRKLFNLSKEDDVRQYVVRKPLNKEGKKPRTKAPKIQRLVTPRVLQHKRRRIALKKQRTKKNKEEAAEYAKLLAKRMKEAKEKRQEQIAKRRRLSSLRASTSKSESSQK</sequence>
<keyword id="KW-0002">3D-structure</keyword>
<keyword id="KW-0007">Acetylation</keyword>
<keyword id="KW-0013">ADP-ribosylation</keyword>
<keyword id="KW-0963">Cytoplasm</keyword>
<keyword id="KW-0903">Direct protein sequencing</keyword>
<keyword id="KW-0379">Hydroxylation</keyword>
<keyword id="KW-1017">Isopeptide bond</keyword>
<keyword id="KW-0539">Nucleus</keyword>
<keyword id="KW-0597">Phosphoprotein</keyword>
<keyword id="KW-1267">Proteomics identification</keyword>
<keyword id="KW-1185">Reference proteome</keyword>
<keyword id="KW-0687">Ribonucleoprotein</keyword>
<keyword id="KW-0689">Ribosomal protein</keyword>
<keyword id="KW-0832">Ubl conjugation</keyword>
<name>RS6_HUMAN</name>
<feature type="chain" id="PRO_0000137312" description="Small ribosomal subunit protein eS6">
    <location>
        <begin position="1"/>
        <end position="249"/>
    </location>
</feature>
<feature type="region of interest" description="Disordered" evidence="1">
    <location>
        <begin position="217"/>
        <end position="249"/>
    </location>
</feature>
<feature type="compositionally biased region" description="Basic and acidic residues" evidence="1">
    <location>
        <begin position="217"/>
        <end position="229"/>
    </location>
</feature>
<feature type="compositionally biased region" description="Low complexity" evidence="1">
    <location>
        <begin position="236"/>
        <end position="249"/>
    </location>
</feature>
<feature type="modified residue" description="ADP-ribosyl glutamic acid" evidence="9">
    <location>
        <position position="35"/>
    </location>
</feature>
<feature type="modified residue" description="(3R)-3-hydroxyarginine" evidence="8">
    <location>
        <position position="137"/>
    </location>
</feature>
<feature type="modified residue" description="Phosphoserine" evidence="23">
    <location>
        <position position="148"/>
    </location>
</feature>
<feature type="modified residue" description="N6-acetyllysine" evidence="20">
    <location>
        <position position="211"/>
    </location>
</feature>
<feature type="modified residue" description="Phosphoserine; by RPS6KA1, RPS6KA3, DAPK1 and PASK" evidence="4 5 6 19 23">
    <location>
        <position position="235"/>
    </location>
</feature>
<feature type="modified residue" description="Phosphoserine; by RPS6KA1, RPS6KA3, DAPK1 and PASK" evidence="4 5 6 19 22 23">
    <location>
        <position position="236"/>
    </location>
</feature>
<feature type="modified residue" description="Phosphoserine" evidence="19 21 22 23">
    <location>
        <position position="240"/>
    </location>
</feature>
<feature type="modified residue" description="Phosphoserine" evidence="22">
    <location>
        <position position="242"/>
    </location>
</feature>
<feature type="modified residue" description="Phosphoserine" evidence="19">
    <location>
        <position position="244"/>
    </location>
</feature>
<feature type="modified residue" description="Phosphoserine" evidence="19">
    <location>
        <position position="247"/>
    </location>
</feature>
<feature type="cross-link" description="Glycyl lysine isopeptide (Lys-Gly) (interchain with G-Cter in SUMO2)" evidence="24">
    <location>
        <position position="14"/>
    </location>
</feature>
<feature type="sequence variant" id="VAR_025314" description="In dbSNP:rs17852447." evidence="2">
    <original>K</original>
    <variation>R</variation>
    <location>
        <position position="221"/>
    </location>
</feature>
<feature type="mutagenesis site" description="Abolishes hydroxylation by KDM8." evidence="8">
    <original>R</original>
    <variation>X</variation>
    <location>
        <position position="137"/>
    </location>
</feature>
<feature type="mutagenesis site" description="Abolishes phosphorylation by PASK." evidence="6">
    <original>SS</original>
    <variation>AA</variation>
    <location>
        <begin position="235"/>
        <end position="236"/>
    </location>
</feature>
<feature type="sequence conflict" description="In Ref. 1; AAA60288." evidence="14" ref="1">
    <original>K</original>
    <variation>T</variation>
    <location>
        <position position="23"/>
    </location>
</feature>
<feature type="sequence conflict" description="In Ref. 1; AAA60288." evidence="14" ref="1">
    <original>L</original>
    <variation>R</variation>
    <location>
        <position position="144"/>
    </location>
</feature>
<feature type="sequence conflict" description="In Ref. 2; AAA60287." evidence="14" ref="2">
    <original>QY</original>
    <variation>EC</variation>
    <location>
        <begin position="155"/>
        <end position="156"/>
    </location>
</feature>
<feature type="sequence conflict" description="In Ref. 2; AAA60287." evidence="14" ref="2">
    <original>K</original>
    <variation>R</variation>
    <location>
        <position position="168"/>
    </location>
</feature>
<feature type="sequence conflict" description="In Ref. 1; AAA60288." evidence="14" ref="1">
    <original>K</original>
    <variation>Q</variation>
    <location>
        <position position="196"/>
    </location>
</feature>
<feature type="sequence conflict" description="In Ref. 2; AAA60287." evidence="14" ref="2">
    <original>E</original>
    <variation>Q</variation>
    <location>
        <position position="219"/>
    </location>
</feature>
<feature type="strand" evidence="30">
    <location>
        <begin position="2"/>
        <end position="7"/>
    </location>
</feature>
<feature type="turn" evidence="30">
    <location>
        <begin position="8"/>
        <end position="11"/>
    </location>
</feature>
<feature type="strand" evidence="30">
    <location>
        <begin position="12"/>
        <end position="17"/>
    </location>
</feature>
<feature type="helix" evidence="30">
    <location>
        <begin position="21"/>
        <end position="24"/>
    </location>
</feature>
<feature type="turn" evidence="30">
    <location>
        <begin position="25"/>
        <end position="29"/>
    </location>
</feature>
<feature type="strand" evidence="31">
    <location>
        <begin position="31"/>
        <end position="33"/>
    </location>
</feature>
<feature type="strand" evidence="30">
    <location>
        <begin position="35"/>
        <end position="37"/>
    </location>
</feature>
<feature type="turn" evidence="28">
    <location>
        <begin position="39"/>
        <end position="41"/>
    </location>
</feature>
<feature type="helix" evidence="30">
    <location>
        <begin position="43"/>
        <end position="45"/>
    </location>
</feature>
<feature type="strand" evidence="30">
    <location>
        <begin position="49"/>
        <end position="56"/>
    </location>
</feature>
<feature type="strand" evidence="30">
    <location>
        <begin position="70"/>
        <end position="77"/>
    </location>
</feature>
<feature type="strand" evidence="26">
    <location>
        <begin position="81"/>
        <end position="83"/>
    </location>
</feature>
<feature type="strand" evidence="25">
    <location>
        <begin position="87"/>
        <end position="90"/>
    </location>
</feature>
<feature type="strand" evidence="30">
    <location>
        <begin position="93"/>
        <end position="98"/>
    </location>
</feature>
<feature type="strand" evidence="27">
    <location>
        <begin position="100"/>
        <end position="102"/>
    </location>
</feature>
<feature type="strand" evidence="30">
    <location>
        <begin position="107"/>
        <end position="115"/>
    </location>
</feature>
<feature type="turn" evidence="30">
    <location>
        <begin position="122"/>
        <end position="124"/>
    </location>
</feature>
<feature type="strand" evidence="30">
    <location>
        <begin position="125"/>
        <end position="127"/>
    </location>
</feature>
<feature type="helix" evidence="30">
    <location>
        <begin position="138"/>
        <end position="144"/>
    </location>
</feature>
<feature type="strand" evidence="26">
    <location>
        <begin position="149"/>
        <end position="151"/>
    </location>
</feature>
<feature type="helix" evidence="30">
    <location>
        <begin position="153"/>
        <end position="155"/>
    </location>
</feature>
<feature type="strand" evidence="30">
    <location>
        <begin position="160"/>
        <end position="162"/>
    </location>
</feature>
<feature type="strand" evidence="29">
    <location>
        <begin position="165"/>
        <end position="167"/>
    </location>
</feature>
<feature type="strand" evidence="30">
    <location>
        <begin position="170"/>
        <end position="172"/>
    </location>
</feature>
<feature type="helix" evidence="30">
    <location>
        <begin position="182"/>
        <end position="219"/>
    </location>
</feature>
<feature type="turn" evidence="30">
    <location>
        <begin position="220"/>
        <end position="223"/>
    </location>
</feature>
<feature type="helix" evidence="26">
    <location>
        <begin position="225"/>
        <end position="229"/>
    </location>
</feature>
<comment type="function">
    <text evidence="3 7 10 11">Component of the 40S small ribosomal subunit (PubMed:23636399, PubMed:8706699). Plays an important role in controlling cell growth and proliferation through the selective translation of particular classes of mRNA (PubMed:17220279). Part of the small subunit (SSU) processome, first precursor of the small eukaryotic ribosomal subunit. During the assembly of the SSU processome in the nucleolus, many ribosome biogenesis factors, an RNA chaperone and ribosomal proteins associate with the nascent pre-rRNA and work in concert to generate RNA folding, modifications, rearrangements and cleavage as well as targeted degradation of pre-ribosomal RNA by the RNA exosome (PubMed:34516797).</text>
</comment>
<comment type="subunit">
    <text evidence="7 10">Component of the small ribosomal subunit. Part of the small subunit (SSU) processome, composed of more than 70 proteins and the RNA chaperone small nucleolar RNA (snoRNA) U3 (PubMed:34516797).</text>
</comment>
<comment type="interaction">
    <interactant intactId="EBI-356625">
        <id>P62753</id>
    </interactant>
    <interactant intactId="EBI-464743">
        <id>Q09161</id>
        <label>NCBP1</label>
    </interactant>
    <organismsDiffer>false</organismsDiffer>
    <experiments>3</experiments>
</comment>
<comment type="interaction">
    <interactant intactId="EBI-356625">
        <id>P62753</id>
    </interactant>
    <interactant intactId="EBI-78579">
        <id>P06748</id>
        <label>NPM1</label>
    </interactant>
    <organismsDiffer>false</organismsDiffer>
    <experiments>3</experiments>
</comment>
<comment type="interaction">
    <interactant intactId="EBI-356625">
        <id>P62753</id>
    </interactant>
    <interactant intactId="EBI-1042651">
        <id>Q96RG2</id>
        <label>PASK</label>
    </interactant>
    <organismsDiffer>false</organismsDiffer>
    <experiments>3</experiments>
</comment>
<comment type="interaction">
    <interactant intactId="EBI-356625">
        <id>P62753</id>
    </interactant>
    <interactant intactId="EBI-25475856">
        <id>P0DTC9</id>
        <label>N</label>
    </interactant>
    <organismsDiffer>true</organismsDiffer>
    <experiments>6</experiments>
</comment>
<comment type="subcellular location">
    <subcellularLocation>
        <location evidence="7">Cytoplasm</location>
    </subcellularLocation>
    <subcellularLocation>
        <location evidence="10">Nucleus</location>
        <location evidence="10">Nucleolus</location>
    </subcellularLocation>
</comment>
<comment type="PTM">
    <text evidence="4 5 6">Ribosomal protein S6 is the major substrate of protein kinases in eukaryote ribosomes. The phosphorylation is stimulated by growth factors, tumor promoting agents, and mitogens. It is dephosphorylated at growth arrest. Phosphorylated at Ser-235 and Ser-236 by RPS6KA1 and RPS6KA3; phosphorylation at these sites facilitates the assembly of the pre-initiation complex.</text>
</comment>
<comment type="PTM">
    <text evidence="8">Specifically hydroxylated (with R stereochemistry) at C-3 of Arg-137 by KDM8.</text>
</comment>
<comment type="PTM">
    <text evidence="9">Mono-ADP-ribosylation at Glu-35 by PARP16 inhibits polysome assembly and mRNA loading, thereby inhibiting protein translation.</text>
</comment>
<comment type="similarity">
    <text evidence="14">Belongs to the eukaryotic ribosomal protein eS6 family.</text>
</comment>
<organism>
    <name type="scientific">Homo sapiens</name>
    <name type="common">Human</name>
    <dbReference type="NCBI Taxonomy" id="9606"/>
    <lineage>
        <taxon>Eukaryota</taxon>
        <taxon>Metazoa</taxon>
        <taxon>Chordata</taxon>
        <taxon>Craniata</taxon>
        <taxon>Vertebrata</taxon>
        <taxon>Euteleostomi</taxon>
        <taxon>Mammalia</taxon>
        <taxon>Eutheria</taxon>
        <taxon>Euarchontoglires</taxon>
        <taxon>Primates</taxon>
        <taxon>Haplorrhini</taxon>
        <taxon>Catarrhini</taxon>
        <taxon>Hominidae</taxon>
        <taxon>Homo</taxon>
    </lineage>
</organism>
<proteinExistence type="evidence at protein level"/>
<accession>P62753</accession>
<accession>P08227</accession>
<accession>P10660</accession>
<accession>Q4VBY7</accession>
<accession>Q8N6Z7</accession>
<protein>
    <recommendedName>
        <fullName evidence="12">Small ribosomal subunit protein eS6</fullName>
    </recommendedName>
    <alternativeName>
        <fullName evidence="13">40S ribosomal protein S6</fullName>
    </alternativeName>
    <alternativeName>
        <fullName>Phosphoprotein NP33</fullName>
    </alternativeName>
</protein>
<reference key="1">
    <citation type="journal article" date="1988" name="Gene">
        <title>Isolation and characterization of cloned cDNAs that code for human ribosomal protein S6.</title>
        <authorList>
            <person name="Lott J.B."/>
            <person name="Mackie G.A."/>
        </authorList>
    </citation>
    <scope>NUCLEOTIDE SEQUENCE [MRNA]</scope>
</reference>
<reference key="2">
    <citation type="journal article" date="1988" name="J. Biol. Chem.">
        <title>The primary structure of the human ribosomal protein S6 derived from a cloned cDNA.</title>
        <authorList>
            <person name="Heinze H."/>
            <person name="Arnold H.H."/>
            <person name="Fischer D."/>
            <person name="Kruppa J."/>
        </authorList>
    </citation>
    <scope>NUCLEOTIDE SEQUENCE [MRNA]</scope>
</reference>
<reference key="3">
    <citation type="journal article" date="1992" name="Hum. Mol. Genet.">
        <title>The organization of the intron-containing human S6 ribosomal protein (rpS6) gene and determination of its location at chromosome 9p21.</title>
        <authorList>
            <person name="Antoine M."/>
            <person name="Fried M."/>
        </authorList>
    </citation>
    <scope>NUCLEOTIDE SEQUENCE [GENOMIC DNA]</scope>
</reference>
<reference key="4">
    <citation type="journal article" date="1992" name="Gene">
        <title>The human ribosomal protein S6 gene: isolation, primary structure and location in chromosome 9.</title>
        <authorList>
            <person name="Pata I."/>
            <person name="Hoth S."/>
            <person name="Kruppa J."/>
            <person name="Metspalu A."/>
        </authorList>
    </citation>
    <scope>NUCLEOTIDE SEQUENCE [GENOMIC DNA]</scope>
</reference>
<reference key="5">
    <citation type="submission" date="2001-05" db="EMBL/GenBank/DDBJ databases">
        <title>Identification of immuno-peptidmics that are recognized by tumor-reactive CTL generated from TIL of colon cancer patients.</title>
        <authorList>
            <person name="Shichijo S."/>
            <person name="Itoh K."/>
        </authorList>
    </citation>
    <scope>NUCLEOTIDE SEQUENCE [LARGE SCALE MRNA]</scope>
    <source>
        <tissue>Colon adenocarcinoma</tissue>
    </source>
</reference>
<reference key="6">
    <citation type="journal article" date="2004" name="Genome Res.">
        <title>The status, quality, and expansion of the NIH full-length cDNA project: the Mammalian Gene Collection (MGC).</title>
        <authorList>
            <consortium name="The MGC Project Team"/>
        </authorList>
    </citation>
    <scope>NUCLEOTIDE SEQUENCE [LARGE SCALE MRNA]</scope>
    <scope>VARIANT ARG-221</scope>
    <source>
        <tissue>Colon</tissue>
        <tissue>Muscle</tissue>
        <tissue>Pancreas</tissue>
        <tissue>Skin</tissue>
        <tissue>Testis</tissue>
    </source>
</reference>
<reference key="7">
    <citation type="journal article" date="1996" name="Eur. J. Biochem.">
        <title>Characterization of the human small-ribosomal-subunit proteins by N-terminal and internal sequencing, and mass spectrometry.</title>
        <authorList>
            <person name="Vladimirov S.N."/>
            <person name="Ivanov A.V."/>
            <person name="Karpova G.G."/>
            <person name="Musolyamov A.K."/>
            <person name="Egorov T.A."/>
            <person name="Thiede B."/>
            <person name="Wittmann-Liebold B."/>
            <person name="Otto A."/>
        </authorList>
    </citation>
    <scope>PROTEIN SEQUENCE OF 1-15</scope>
    <scope>FUNCTION</scope>
    <source>
        <tissue>Placenta</tissue>
    </source>
</reference>
<reference key="8">
    <citation type="journal article" date="2006" name="Cell">
        <title>Global, in vivo, and site-specific phosphorylation dynamics in signaling networks.</title>
        <authorList>
            <person name="Olsen J.V."/>
            <person name="Blagoev B."/>
            <person name="Gnad F."/>
            <person name="Macek B."/>
            <person name="Kumar C."/>
            <person name="Mortensen P."/>
            <person name="Mann M."/>
        </authorList>
    </citation>
    <scope>IDENTIFICATION BY MASS SPECTROMETRY [LARGE SCALE ANALYSIS]</scope>
    <source>
        <tissue>Cervix carcinoma</tissue>
    </source>
</reference>
<reference key="9">
    <citation type="journal article" date="2007" name="J. Biol. Chem.">
        <title>RAS/ERK signaling promotes site-specific ribosomal protein S6 phosphorylation via RSK and stimulates cap-dependent translation.</title>
        <authorList>
            <person name="Roux P.P."/>
            <person name="Shahbazian D."/>
            <person name="Vu H."/>
            <person name="Holz M.K."/>
            <person name="Cohen M.S."/>
            <person name="Taunton J."/>
            <person name="Sonenberg N."/>
            <person name="Blenis J."/>
        </authorList>
    </citation>
    <scope>PHOSPHORYLATION AT SER-235 AND SER-236</scope>
</reference>
<reference key="10">
    <citation type="journal article" date="2007" name="Mol. Cell. Biol.">
        <title>hDREF regulates cell proliferation and expression of ribosomal protein genes.</title>
        <authorList>
            <person name="Yamashita D."/>
            <person name="Sano Y."/>
            <person name="Adachi Y."/>
            <person name="Okamoto Y."/>
            <person name="Osada H."/>
            <person name="Takahashi T."/>
            <person name="Yamaguchi T."/>
            <person name="Osumi T."/>
            <person name="Hirose F."/>
        </authorList>
    </citation>
    <scope>FUNCTION</scope>
</reference>
<reference key="11">
    <citation type="journal article" date="2008" name="Mol. Cell">
        <title>Kinase-selective enrichment enables quantitative phosphoproteomics of the kinome across the cell cycle.</title>
        <authorList>
            <person name="Daub H."/>
            <person name="Olsen J.V."/>
            <person name="Bairlein M."/>
            <person name="Gnad F."/>
            <person name="Oppermann F.S."/>
            <person name="Korner R."/>
            <person name="Greff Z."/>
            <person name="Keri G."/>
            <person name="Stemmann O."/>
            <person name="Mann M."/>
        </authorList>
    </citation>
    <scope>IDENTIFICATION BY MASS SPECTROMETRY [LARGE SCALE ANALYSIS]</scope>
    <source>
        <tissue>Cervix carcinoma</tissue>
    </source>
</reference>
<reference key="12">
    <citation type="journal article" date="2008" name="Proc. Natl. Acad. Sci. U.S.A.">
        <title>A quantitative atlas of mitotic phosphorylation.</title>
        <authorList>
            <person name="Dephoure N."/>
            <person name="Zhou C."/>
            <person name="Villen J."/>
            <person name="Beausoleil S.A."/>
            <person name="Bakalarski C.E."/>
            <person name="Elledge S.J."/>
            <person name="Gygi S.P."/>
        </authorList>
    </citation>
    <scope>PHOSPHORYLATION [LARGE SCALE ANALYSIS] AT SER-235; SER-236; SER-240; SER-244 AND SER-247</scope>
    <scope>IDENTIFICATION BY MASS SPECTROMETRY [LARGE SCALE ANALYSIS]</scope>
    <source>
        <tissue>Cervix carcinoma</tissue>
    </source>
</reference>
<reference key="13">
    <citation type="journal article" date="2009" name="J. Biol. Chem.">
        <title>Peptide combinatorial libraries identify TSC2 as a death-associated protein kinase (DAPK) death domain-binding protein and reveal a stimulatory role for DAPK in mTORC1 signaling.</title>
        <authorList>
            <person name="Stevens C."/>
            <person name="Lin Y."/>
            <person name="Harrison B."/>
            <person name="Burch L."/>
            <person name="Ridgway R.A."/>
            <person name="Sansom O."/>
            <person name="Hupp T."/>
        </authorList>
    </citation>
    <scope>PHOSPHORYLATION AT SER-235 AND SER-236 BY DAPK1</scope>
</reference>
<reference key="14">
    <citation type="journal article" date="2009" name="Science">
        <title>Lysine acetylation targets protein complexes and co-regulates major cellular functions.</title>
        <authorList>
            <person name="Choudhary C."/>
            <person name="Kumar C."/>
            <person name="Gnad F."/>
            <person name="Nielsen M.L."/>
            <person name="Rehman M."/>
            <person name="Walther T.C."/>
            <person name="Olsen J.V."/>
            <person name="Mann M."/>
        </authorList>
    </citation>
    <scope>ACETYLATION [LARGE SCALE ANALYSIS] AT LYS-211</scope>
    <scope>IDENTIFICATION BY MASS SPECTROMETRY [LARGE SCALE ANALYSIS]</scope>
</reference>
<reference key="15">
    <citation type="journal article" date="2010" name="Sci. Signal.">
        <title>Quantitative phosphoproteomics reveals widespread full phosphorylation site occupancy during mitosis.</title>
        <authorList>
            <person name="Olsen J.V."/>
            <person name="Vermeulen M."/>
            <person name="Santamaria A."/>
            <person name="Kumar C."/>
            <person name="Miller M.L."/>
            <person name="Jensen L.J."/>
            <person name="Gnad F."/>
            <person name="Cox J."/>
            <person name="Jensen T.S."/>
            <person name="Nigg E.A."/>
            <person name="Brunak S."/>
            <person name="Mann M."/>
        </authorList>
    </citation>
    <scope>PHOSPHORYLATION [LARGE SCALE ANALYSIS] AT SER-240</scope>
    <scope>IDENTIFICATION BY MASS SPECTROMETRY [LARGE SCALE ANALYSIS]</scope>
    <source>
        <tissue>Cervix carcinoma</tissue>
    </source>
</reference>
<reference key="16">
    <citation type="journal article" date="2011" name="BMC Syst. Biol.">
        <title>Initial characterization of the human central proteome.</title>
        <authorList>
            <person name="Burkard T.R."/>
            <person name="Planyavsky M."/>
            <person name="Kaupe I."/>
            <person name="Breitwieser F.P."/>
            <person name="Buerckstuemmer T."/>
            <person name="Bennett K.L."/>
            <person name="Superti-Furga G."/>
            <person name="Colinge J."/>
        </authorList>
    </citation>
    <scope>IDENTIFICATION BY MASS SPECTROMETRY [LARGE SCALE ANALYSIS]</scope>
</reference>
<reference key="17">
    <citation type="journal article" date="2011" name="FEBS J.">
        <title>Substrate preference and phosphatidylinositol monophosphate inhibition of the catalytic domain of the Per-Arnt-Sim domain kinase PASKIN.</title>
        <authorList>
            <person name="Schlafli P."/>
            <person name="Troger J."/>
            <person name="Eckhardt K."/>
            <person name="Borter E."/>
            <person name="Spielmann P."/>
            <person name="Wenger R.H."/>
        </authorList>
    </citation>
    <scope>PHOSPHORYLATION AT SER-235 AND SER-236</scope>
    <scope>MUTAGENESIS OF 235-SER-SER-236</scope>
</reference>
<reference key="18">
    <citation type="journal article" date="2011" name="Sci. Signal.">
        <title>System-wide temporal characterization of the proteome and phosphoproteome of human embryonic stem cell differentiation.</title>
        <authorList>
            <person name="Rigbolt K.T."/>
            <person name="Prokhorova T.A."/>
            <person name="Akimov V."/>
            <person name="Henningsen J."/>
            <person name="Johansen P.T."/>
            <person name="Kratchmarova I."/>
            <person name="Kassem M."/>
            <person name="Mann M."/>
            <person name="Olsen J.V."/>
            <person name="Blagoev B."/>
        </authorList>
    </citation>
    <scope>PHOSPHORYLATION [LARGE SCALE ANALYSIS] AT SER-236; SER-240 AND SER-242</scope>
    <scope>IDENTIFICATION BY MASS SPECTROMETRY [LARGE SCALE ANALYSIS]</scope>
</reference>
<reference key="19">
    <citation type="journal article" date="2012" name="Proc. Natl. Acad. Sci. U.S.A.">
        <title>N-terminal acetylome analyses and functional insights of the N-terminal acetyltransferase NatB.</title>
        <authorList>
            <person name="Van Damme P."/>
            <person name="Lasa M."/>
            <person name="Polevoda B."/>
            <person name="Gazquez C."/>
            <person name="Elosegui-Artola A."/>
            <person name="Kim D.S."/>
            <person name="De Juan-Pardo E."/>
            <person name="Demeyer K."/>
            <person name="Hole K."/>
            <person name="Larrea E."/>
            <person name="Timmerman E."/>
            <person name="Prieto J."/>
            <person name="Arnesen T."/>
            <person name="Sherman F."/>
            <person name="Gevaert K."/>
            <person name="Aldabe R."/>
        </authorList>
    </citation>
    <scope>IDENTIFICATION BY MASS SPECTROMETRY [LARGE SCALE ANALYSIS]</scope>
</reference>
<reference key="20">
    <citation type="journal article" date="2013" name="J. Proteome Res.">
        <title>Toward a comprehensive characterization of a human cancer cell phosphoproteome.</title>
        <authorList>
            <person name="Zhou H."/>
            <person name="Di Palma S."/>
            <person name="Preisinger C."/>
            <person name="Peng M."/>
            <person name="Polat A.N."/>
            <person name="Heck A.J."/>
            <person name="Mohammed S."/>
        </authorList>
    </citation>
    <scope>PHOSPHORYLATION [LARGE SCALE ANALYSIS] AT SER-148; SER-235; SER-236 AND SER-240</scope>
    <scope>IDENTIFICATION BY MASS SPECTROMETRY [LARGE SCALE ANALYSIS]</scope>
    <source>
        <tissue>Cervix carcinoma</tissue>
        <tissue>Erythroleukemia</tissue>
    </source>
</reference>
<reference key="21">
    <citation type="journal article" date="2014" name="Curr. Opin. Struct. Biol.">
        <title>A new system for naming ribosomal proteins.</title>
        <authorList>
            <person name="Ban N."/>
            <person name="Beckmann R."/>
            <person name="Cate J.H.D."/>
            <person name="Dinman J.D."/>
            <person name="Dragon F."/>
            <person name="Ellis S.R."/>
            <person name="Lafontaine D.L.J."/>
            <person name="Lindahl L."/>
            <person name="Liljas A."/>
            <person name="Lipton J.M."/>
            <person name="McAlear M.A."/>
            <person name="Moore P.B."/>
            <person name="Noller H.F."/>
            <person name="Ortega J."/>
            <person name="Panse V.G."/>
            <person name="Ramakrishnan V."/>
            <person name="Spahn C.M.T."/>
            <person name="Steitz T.A."/>
            <person name="Tchorzewski M."/>
            <person name="Tollervey D."/>
            <person name="Warren A.J."/>
            <person name="Williamson J.R."/>
            <person name="Wilson D."/>
            <person name="Yonath A."/>
            <person name="Yusupov M."/>
        </authorList>
    </citation>
    <scope>NOMENCLATURE</scope>
</reference>
<reference key="22">
    <citation type="journal article" date="2014" name="J. Proteomics">
        <title>An enzyme assisted RP-RPLC approach for in-depth analysis of human liver phosphoproteome.</title>
        <authorList>
            <person name="Bian Y."/>
            <person name="Song C."/>
            <person name="Cheng K."/>
            <person name="Dong M."/>
            <person name="Wang F."/>
            <person name="Huang J."/>
            <person name="Sun D."/>
            <person name="Wang L."/>
            <person name="Ye M."/>
            <person name="Zou H."/>
        </authorList>
    </citation>
    <scope>IDENTIFICATION BY MASS SPECTROMETRY [LARGE SCALE ANALYSIS]</scope>
    <source>
        <tissue>Liver</tissue>
    </source>
</reference>
<reference key="23">
    <citation type="journal article" date="2015" name="Proteomics">
        <title>N-terminome analysis of the human mitochondrial proteome.</title>
        <authorList>
            <person name="Vaca Jacome A.S."/>
            <person name="Rabilloud T."/>
            <person name="Schaeffer-Reiss C."/>
            <person name="Rompais M."/>
            <person name="Ayoub D."/>
            <person name="Lane L."/>
            <person name="Bairoch A."/>
            <person name="Van Dorsselaer A."/>
            <person name="Carapito C."/>
        </authorList>
    </citation>
    <scope>IDENTIFICATION BY MASS SPECTROMETRY [LARGE SCALE ANALYSIS]</scope>
</reference>
<reference key="24">
    <citation type="journal article" date="2017" name="Nat. Struct. Mol. Biol.">
        <title>Site-specific mapping of the human SUMO proteome reveals co-modification with phosphorylation.</title>
        <authorList>
            <person name="Hendriks I.A."/>
            <person name="Lyon D."/>
            <person name="Young C."/>
            <person name="Jensen L.J."/>
            <person name="Vertegaal A.C."/>
            <person name="Nielsen M.L."/>
        </authorList>
    </citation>
    <scope>SUMOYLATION [LARGE SCALE ANALYSIS] AT LYS-14</scope>
    <scope>IDENTIFICATION BY MASS SPECTROMETRY [LARGE SCALE ANALYSIS]</scope>
</reference>
<reference key="25">
    <citation type="journal article" date="2018" name="Nat. Commun.">
        <title>JMJD5 is a human L-arginyl C-3 hydroxylase.</title>
        <authorList>
            <person name="Wilkins S.E."/>
            <person name="Islam S."/>
            <person name="Gannon J.M."/>
            <person name="Markolovic S."/>
            <person name="Hopkinson R.J."/>
            <person name="Ge W."/>
            <person name="Schofield C.J."/>
            <person name="Chowdhury R."/>
        </authorList>
    </citation>
    <scope>HYDROXYLATION AT ARG-137</scope>
    <scope>MUTAGENESIS OF ARG-137</scope>
</reference>
<reference key="26">
    <citation type="journal article" date="2021" name="Cell">
        <title>Ribosome ADP-ribosylation inhibits translation and maintains proteostasis in cancers.</title>
        <authorList>
            <person name="Challa S."/>
            <person name="Khulpateea B.R."/>
            <person name="Nandu T."/>
            <person name="Camacho C.V."/>
            <person name="Ryu K.W."/>
            <person name="Chen H."/>
            <person name="Peng Y."/>
            <person name="Lea J.S."/>
            <person name="Kraus W.L."/>
        </authorList>
    </citation>
    <scope>ADP-RIBOSYLATION AT GLU-35</scope>
</reference>
<reference key="27">
    <citation type="journal article" date="2013" name="Nature">
        <title>Structures of the human and Drosophila 80S ribosome.</title>
        <authorList>
            <person name="Anger A.M."/>
            <person name="Armache J.P."/>
            <person name="Berninghausen O."/>
            <person name="Habeck M."/>
            <person name="Subklewe M."/>
            <person name="Wilson D.N."/>
            <person name="Beckmann R."/>
        </authorList>
    </citation>
    <scope>STRUCTURE BY ELECTRON MICROSCOPY (5.0 ANGSTROMS) OF RIBOSOME</scope>
    <scope>FUNCTION</scope>
    <scope>SUBUNIT</scope>
    <scope>SUBCELLULAR LOCATION</scope>
</reference>
<reference evidence="16 17 18" key="28">
    <citation type="journal article" date="2021" name="Science">
        <title>Nucleolar maturation of the human small subunit processome.</title>
        <authorList>
            <person name="Singh S."/>
            <person name="Vanden Broeck A."/>
            <person name="Miller L."/>
            <person name="Chaker-Margot M."/>
            <person name="Klinge S."/>
        </authorList>
    </citation>
    <scope>STRUCTURE BY ELECTRON MICROSCOPY (2.70 ANGSTROMS)</scope>
    <scope>FUNCTION</scope>
    <scope>SUBUNIT</scope>
    <scope>SUBCELLULAR LOCATION</scope>
</reference>
<dbReference type="EMBL" id="M20020">
    <property type="protein sequence ID" value="AAA60288.1"/>
    <property type="molecule type" value="mRNA"/>
</dbReference>
<dbReference type="EMBL" id="J03537">
    <property type="protein sequence ID" value="AAA60287.1"/>
    <property type="molecule type" value="mRNA"/>
</dbReference>
<dbReference type="EMBL" id="X67309">
    <property type="protein sequence ID" value="CAA47719.1"/>
    <property type="molecule type" value="Genomic_DNA"/>
</dbReference>
<dbReference type="EMBL" id="M77232">
    <property type="protein sequence ID" value="AAA60289.1"/>
    <property type="molecule type" value="Genomic_DNA"/>
</dbReference>
<dbReference type="EMBL" id="AB062123">
    <property type="protein sequence ID" value="BAB93455.1"/>
    <property type="molecule type" value="mRNA"/>
</dbReference>
<dbReference type="EMBL" id="BC000524">
    <property type="protein sequence ID" value="AAH00524.1"/>
    <property type="molecule type" value="mRNA"/>
</dbReference>
<dbReference type="EMBL" id="BC009427">
    <property type="protein sequence ID" value="AAH09427.2"/>
    <property type="molecule type" value="mRNA"/>
</dbReference>
<dbReference type="EMBL" id="BC027620">
    <property type="protein sequence ID" value="AAH27620.1"/>
    <property type="molecule type" value="mRNA"/>
</dbReference>
<dbReference type="EMBL" id="BC071907">
    <property type="protein sequence ID" value="AAH71907.1"/>
    <property type="molecule type" value="mRNA"/>
</dbReference>
<dbReference type="EMBL" id="BC071908">
    <property type="protein sequence ID" value="AAH71908.1"/>
    <property type="molecule type" value="mRNA"/>
</dbReference>
<dbReference type="EMBL" id="BC094826">
    <property type="protein sequence ID" value="AAH94826.1"/>
    <property type="molecule type" value="mRNA"/>
</dbReference>
<dbReference type="CCDS" id="CCDS6492.1"/>
<dbReference type="PIR" id="JC1394">
    <property type="entry name" value="R3HU6"/>
</dbReference>
<dbReference type="RefSeq" id="NP_001001.2">
    <property type="nucleotide sequence ID" value="NM_001010.2"/>
</dbReference>
<dbReference type="PDB" id="4UG0">
    <property type="method" value="EM"/>
    <property type="chains" value="SG=1-249"/>
</dbReference>
<dbReference type="PDB" id="4V6X">
    <property type="method" value="EM"/>
    <property type="resolution" value="5.00 A"/>
    <property type="chains" value="AG=1-249"/>
</dbReference>
<dbReference type="PDB" id="5A2Q">
    <property type="method" value="EM"/>
    <property type="resolution" value="3.90 A"/>
    <property type="chains" value="G=1-249"/>
</dbReference>
<dbReference type="PDB" id="5AJ0">
    <property type="method" value="EM"/>
    <property type="resolution" value="3.50 A"/>
    <property type="chains" value="BG=1-249"/>
</dbReference>
<dbReference type="PDB" id="5FLX">
    <property type="method" value="EM"/>
    <property type="resolution" value="3.90 A"/>
    <property type="chains" value="G=1-249"/>
</dbReference>
<dbReference type="PDB" id="5LKS">
    <property type="method" value="EM"/>
    <property type="resolution" value="3.60 A"/>
    <property type="chains" value="SG=1-249"/>
</dbReference>
<dbReference type="PDB" id="5OA3">
    <property type="method" value="EM"/>
    <property type="resolution" value="4.30 A"/>
    <property type="chains" value="G=1-249"/>
</dbReference>
<dbReference type="PDB" id="5T2C">
    <property type="method" value="EM"/>
    <property type="resolution" value="3.60 A"/>
    <property type="chains" value="AK=1-249"/>
</dbReference>
<dbReference type="PDB" id="5VYC">
    <property type="method" value="X-ray"/>
    <property type="resolution" value="6.00 A"/>
    <property type="chains" value="G1/G2/G3/G4/G5/G6=1-249"/>
</dbReference>
<dbReference type="PDB" id="6F4P">
    <property type="method" value="X-ray"/>
    <property type="resolution" value="1.45 A"/>
    <property type="chains" value="B=129-144"/>
</dbReference>
<dbReference type="PDB" id="6F4Q">
    <property type="method" value="X-ray"/>
    <property type="resolution" value="1.12 A"/>
    <property type="chains" value="B=129-144"/>
</dbReference>
<dbReference type="PDB" id="6FEC">
    <property type="method" value="EM"/>
    <property type="resolution" value="6.30 A"/>
    <property type="chains" value="q=1-237"/>
</dbReference>
<dbReference type="PDB" id="6G18">
    <property type="method" value="EM"/>
    <property type="resolution" value="3.60 A"/>
    <property type="chains" value="G=1-249"/>
</dbReference>
<dbReference type="PDB" id="6G4S">
    <property type="method" value="EM"/>
    <property type="resolution" value="4.00 A"/>
    <property type="chains" value="G=1-249"/>
</dbReference>
<dbReference type="PDB" id="6G4W">
    <property type="method" value="EM"/>
    <property type="resolution" value="4.50 A"/>
    <property type="chains" value="G=1-249"/>
</dbReference>
<dbReference type="PDB" id="6G51">
    <property type="method" value="EM"/>
    <property type="resolution" value="4.10 A"/>
    <property type="chains" value="G=1-249"/>
</dbReference>
<dbReference type="PDB" id="6G53">
    <property type="method" value="EM"/>
    <property type="resolution" value="4.50 A"/>
    <property type="chains" value="G=1-249"/>
</dbReference>
<dbReference type="PDB" id="6G5H">
    <property type="method" value="EM"/>
    <property type="resolution" value="3.60 A"/>
    <property type="chains" value="G=1-249"/>
</dbReference>
<dbReference type="PDB" id="6G5I">
    <property type="method" value="EM"/>
    <property type="resolution" value="3.50 A"/>
    <property type="chains" value="G=1-249"/>
</dbReference>
<dbReference type="PDB" id="6IP5">
    <property type="method" value="EM"/>
    <property type="resolution" value="3.90 A"/>
    <property type="chains" value="3H=1-249"/>
</dbReference>
<dbReference type="PDB" id="6IP6">
    <property type="method" value="EM"/>
    <property type="resolution" value="4.50 A"/>
    <property type="chains" value="3H=1-249"/>
</dbReference>
<dbReference type="PDB" id="6IP8">
    <property type="method" value="EM"/>
    <property type="resolution" value="3.90 A"/>
    <property type="chains" value="3H=1-249"/>
</dbReference>
<dbReference type="PDB" id="6OLE">
    <property type="method" value="EM"/>
    <property type="resolution" value="3.10 A"/>
    <property type="chains" value="SG=1-237"/>
</dbReference>
<dbReference type="PDB" id="6OLF">
    <property type="method" value="EM"/>
    <property type="resolution" value="3.90 A"/>
    <property type="chains" value="SG=1-237"/>
</dbReference>
<dbReference type="PDB" id="6OLG">
    <property type="method" value="EM"/>
    <property type="resolution" value="3.40 A"/>
    <property type="chains" value="BG=1-232"/>
</dbReference>
<dbReference type="PDB" id="6OLI">
    <property type="method" value="EM"/>
    <property type="resolution" value="3.50 A"/>
    <property type="chains" value="SG=1-237"/>
</dbReference>
<dbReference type="PDB" id="6OLZ">
    <property type="method" value="EM"/>
    <property type="resolution" value="3.90 A"/>
    <property type="chains" value="BG=1-232"/>
</dbReference>
<dbReference type="PDB" id="6OM0">
    <property type="method" value="EM"/>
    <property type="resolution" value="3.10 A"/>
    <property type="chains" value="SG=1-237"/>
</dbReference>
<dbReference type="PDB" id="6OM7">
    <property type="method" value="EM"/>
    <property type="resolution" value="3.70 A"/>
    <property type="chains" value="SG=1-237"/>
</dbReference>
<dbReference type="PDB" id="6QZP">
    <property type="method" value="EM"/>
    <property type="resolution" value="2.90 A"/>
    <property type="chains" value="SG=1-237"/>
</dbReference>
<dbReference type="PDB" id="6XA1">
    <property type="method" value="EM"/>
    <property type="resolution" value="2.80 A"/>
    <property type="chains" value="SG=1-228"/>
</dbReference>
<dbReference type="PDB" id="6Y0G">
    <property type="method" value="EM"/>
    <property type="resolution" value="3.20 A"/>
    <property type="chains" value="SG=1-249"/>
</dbReference>
<dbReference type="PDB" id="6Y2L">
    <property type="method" value="EM"/>
    <property type="resolution" value="3.00 A"/>
    <property type="chains" value="SG=1-249"/>
</dbReference>
<dbReference type="PDB" id="6Y57">
    <property type="method" value="EM"/>
    <property type="resolution" value="3.50 A"/>
    <property type="chains" value="SG=1-249"/>
</dbReference>
<dbReference type="PDB" id="6YBW">
    <property type="method" value="EM"/>
    <property type="resolution" value="3.10 A"/>
    <property type="chains" value="S=1-249"/>
</dbReference>
<dbReference type="PDB" id="6Z6L">
    <property type="method" value="EM"/>
    <property type="resolution" value="3.00 A"/>
    <property type="chains" value="SG=1-249"/>
</dbReference>
<dbReference type="PDB" id="6Z6M">
    <property type="method" value="EM"/>
    <property type="resolution" value="3.10 A"/>
    <property type="chains" value="SG=1-249"/>
</dbReference>
<dbReference type="PDB" id="6Z6N">
    <property type="method" value="EM"/>
    <property type="resolution" value="2.90 A"/>
    <property type="chains" value="SG=1-249"/>
</dbReference>
<dbReference type="PDB" id="6ZLW">
    <property type="method" value="EM"/>
    <property type="resolution" value="2.60 A"/>
    <property type="chains" value="G=1-249"/>
</dbReference>
<dbReference type="PDB" id="6ZM7">
    <property type="method" value="EM"/>
    <property type="resolution" value="2.70 A"/>
    <property type="chains" value="SG=1-249"/>
</dbReference>
<dbReference type="PDB" id="6ZME">
    <property type="method" value="EM"/>
    <property type="resolution" value="3.00 A"/>
    <property type="chains" value="SG=1-249"/>
</dbReference>
<dbReference type="PDB" id="6ZMI">
    <property type="method" value="EM"/>
    <property type="resolution" value="2.60 A"/>
    <property type="chains" value="SG=1-249"/>
</dbReference>
<dbReference type="PDB" id="6ZMO">
    <property type="method" value="EM"/>
    <property type="resolution" value="3.10 A"/>
    <property type="chains" value="SG=1-249"/>
</dbReference>
<dbReference type="PDB" id="6ZMT">
    <property type="method" value="EM"/>
    <property type="resolution" value="3.00 A"/>
    <property type="chains" value="G=1-249"/>
</dbReference>
<dbReference type="PDB" id="6ZMW">
    <property type="method" value="EM"/>
    <property type="resolution" value="3.70 A"/>
    <property type="chains" value="S=1-249"/>
</dbReference>
<dbReference type="PDB" id="6ZN5">
    <property type="method" value="EM"/>
    <property type="resolution" value="3.20 A"/>
    <property type="chains" value="G=1-230"/>
</dbReference>
<dbReference type="PDB" id="6ZOJ">
    <property type="method" value="EM"/>
    <property type="resolution" value="2.80 A"/>
    <property type="chains" value="G=1-249"/>
</dbReference>
<dbReference type="PDB" id="6ZOK">
    <property type="method" value="EM"/>
    <property type="resolution" value="2.80 A"/>
    <property type="chains" value="G=1-249"/>
</dbReference>
<dbReference type="PDB" id="6ZON">
    <property type="method" value="EM"/>
    <property type="resolution" value="3.00 A"/>
    <property type="chains" value="r=1-249"/>
</dbReference>
<dbReference type="PDB" id="6ZP4">
    <property type="method" value="EM"/>
    <property type="resolution" value="2.90 A"/>
    <property type="chains" value="r=1-249"/>
</dbReference>
<dbReference type="PDB" id="6ZUO">
    <property type="method" value="EM"/>
    <property type="resolution" value="3.10 A"/>
    <property type="chains" value="G=1-249"/>
</dbReference>
<dbReference type="PDB" id="6ZV6">
    <property type="method" value="EM"/>
    <property type="resolution" value="2.90 A"/>
    <property type="chains" value="G=1-249"/>
</dbReference>
<dbReference type="PDB" id="6ZVH">
    <property type="method" value="EM"/>
    <property type="resolution" value="2.90 A"/>
    <property type="chains" value="G=1-237"/>
</dbReference>
<dbReference type="PDB" id="6ZVJ">
    <property type="method" value="EM"/>
    <property type="resolution" value="3.80 A"/>
    <property type="chains" value="r=2-223"/>
</dbReference>
<dbReference type="PDB" id="6ZXD">
    <property type="method" value="EM"/>
    <property type="resolution" value="3.20 A"/>
    <property type="chains" value="G=1-249"/>
</dbReference>
<dbReference type="PDB" id="6ZXE">
    <property type="method" value="EM"/>
    <property type="resolution" value="3.00 A"/>
    <property type="chains" value="G=1-249"/>
</dbReference>
<dbReference type="PDB" id="6ZXF">
    <property type="method" value="EM"/>
    <property type="resolution" value="3.70 A"/>
    <property type="chains" value="G=1-249"/>
</dbReference>
<dbReference type="PDB" id="6ZXG">
    <property type="method" value="EM"/>
    <property type="resolution" value="2.60 A"/>
    <property type="chains" value="G=1-249"/>
</dbReference>
<dbReference type="PDB" id="6ZXH">
    <property type="method" value="EM"/>
    <property type="resolution" value="2.70 A"/>
    <property type="chains" value="G=1-249"/>
</dbReference>
<dbReference type="PDB" id="7A09">
    <property type="method" value="EM"/>
    <property type="resolution" value="3.50 A"/>
    <property type="chains" value="r=1-249"/>
</dbReference>
<dbReference type="PDB" id="7K5I">
    <property type="method" value="EM"/>
    <property type="resolution" value="2.90 A"/>
    <property type="chains" value="G=1-249"/>
</dbReference>
<dbReference type="PDB" id="7MQ8">
    <property type="method" value="EM"/>
    <property type="resolution" value="3.60 A"/>
    <property type="chains" value="L6=1-249"/>
</dbReference>
<dbReference type="PDB" id="7MQ9">
    <property type="method" value="EM"/>
    <property type="resolution" value="3.87 A"/>
    <property type="chains" value="L6=1-249"/>
</dbReference>
<dbReference type="PDB" id="7MQA">
    <property type="method" value="EM"/>
    <property type="resolution" value="2.70 A"/>
    <property type="chains" value="L6=1-249"/>
</dbReference>
<dbReference type="PDB" id="7QP6">
    <property type="method" value="EM"/>
    <property type="resolution" value="4.70 A"/>
    <property type="chains" value="S=1-249"/>
</dbReference>
<dbReference type="PDB" id="7QP7">
    <property type="method" value="EM"/>
    <property type="resolution" value="3.70 A"/>
    <property type="chains" value="S=1-249"/>
</dbReference>
<dbReference type="PDB" id="7QVP">
    <property type="method" value="EM"/>
    <property type="resolution" value="3.00 A"/>
    <property type="chains" value="RG/SG=1-249"/>
</dbReference>
<dbReference type="PDB" id="7R4X">
    <property type="method" value="EM"/>
    <property type="resolution" value="2.15 A"/>
    <property type="chains" value="G=1-249"/>
</dbReference>
<dbReference type="PDB" id="7TQL">
    <property type="method" value="EM"/>
    <property type="resolution" value="3.40 A"/>
    <property type="chains" value="G=1-226"/>
</dbReference>
<dbReference type="PDB" id="7WTS">
    <property type="method" value="EM"/>
    <property type="resolution" value="3.20 A"/>
    <property type="chains" value="G=1-249"/>
</dbReference>
<dbReference type="PDB" id="7WTT">
    <property type="method" value="EM"/>
    <property type="resolution" value="3.10 A"/>
    <property type="chains" value="G=1-249"/>
</dbReference>
<dbReference type="PDB" id="7WTU">
    <property type="method" value="EM"/>
    <property type="resolution" value="3.00 A"/>
    <property type="chains" value="G=1-249"/>
</dbReference>
<dbReference type="PDB" id="7WTV">
    <property type="method" value="EM"/>
    <property type="resolution" value="3.50 A"/>
    <property type="chains" value="G=1-249"/>
</dbReference>
<dbReference type="PDB" id="7WTW">
    <property type="method" value="EM"/>
    <property type="resolution" value="3.20 A"/>
    <property type="chains" value="G=1-249"/>
</dbReference>
<dbReference type="PDB" id="7WTX">
    <property type="method" value="EM"/>
    <property type="resolution" value="3.10 A"/>
    <property type="chains" value="G=1-249"/>
</dbReference>
<dbReference type="PDB" id="7WTZ">
    <property type="method" value="EM"/>
    <property type="resolution" value="3.00 A"/>
    <property type="chains" value="G=1-249"/>
</dbReference>
<dbReference type="PDB" id="7WU0">
    <property type="method" value="EM"/>
    <property type="resolution" value="3.30 A"/>
    <property type="chains" value="G=1-249"/>
</dbReference>
<dbReference type="PDB" id="7XNX">
    <property type="method" value="EM"/>
    <property type="resolution" value="2.70 A"/>
    <property type="chains" value="SG=1-249"/>
</dbReference>
<dbReference type="PDB" id="7XNY">
    <property type="method" value="EM"/>
    <property type="resolution" value="2.50 A"/>
    <property type="chains" value="SG=1-249"/>
</dbReference>
<dbReference type="PDB" id="7ZJW">
    <property type="method" value="EM"/>
    <property type="resolution" value="2.80 A"/>
    <property type="chains" value="SR=1-249"/>
</dbReference>
<dbReference type="PDB" id="7ZJX">
    <property type="method" value="EM"/>
    <property type="resolution" value="3.10 A"/>
    <property type="chains" value="SR=1-249"/>
</dbReference>
<dbReference type="PDB" id="8G5Y">
    <property type="method" value="EM"/>
    <property type="resolution" value="2.29 A"/>
    <property type="chains" value="SG=1-249"/>
</dbReference>
<dbReference type="PDB" id="8G5Z">
    <property type="method" value="EM"/>
    <property type="resolution" value="2.64 A"/>
    <property type="chains" value="SG=1-237"/>
</dbReference>
<dbReference type="PDB" id="8G60">
    <property type="method" value="EM"/>
    <property type="resolution" value="2.54 A"/>
    <property type="chains" value="SG=1-249"/>
</dbReference>
<dbReference type="PDB" id="8G61">
    <property type="method" value="EM"/>
    <property type="resolution" value="2.94 A"/>
    <property type="chains" value="SG=1-249"/>
</dbReference>
<dbReference type="PDB" id="8G6J">
    <property type="method" value="EM"/>
    <property type="resolution" value="2.80 A"/>
    <property type="chains" value="SG=1-249"/>
</dbReference>
<dbReference type="PDB" id="8GLP">
    <property type="method" value="EM"/>
    <property type="resolution" value="1.67 A"/>
    <property type="chains" value="SG=1-249"/>
</dbReference>
<dbReference type="PDB" id="8IFD">
    <property type="method" value="EM"/>
    <property type="resolution" value="2.59 A"/>
    <property type="chains" value="3H=1-249"/>
</dbReference>
<dbReference type="PDB" id="8IFE">
    <property type="method" value="EM"/>
    <property type="resolution" value="2.57 A"/>
    <property type="chains" value="3H=1-249"/>
</dbReference>
<dbReference type="PDB" id="8JDJ">
    <property type="method" value="EM"/>
    <property type="resolution" value="2.50 A"/>
    <property type="chains" value="3=1-249"/>
</dbReference>
<dbReference type="PDB" id="8JDK">
    <property type="method" value="EM"/>
    <property type="resolution" value="2.26 A"/>
    <property type="chains" value="3=1-249"/>
</dbReference>
<dbReference type="PDB" id="8JDL">
    <property type="method" value="EM"/>
    <property type="resolution" value="2.42 A"/>
    <property type="chains" value="3=1-249"/>
</dbReference>
<dbReference type="PDB" id="8JDM">
    <property type="method" value="EM"/>
    <property type="resolution" value="2.67 A"/>
    <property type="chains" value="3=1-249"/>
</dbReference>
<dbReference type="PDB" id="8K2C">
    <property type="method" value="EM"/>
    <property type="resolution" value="2.40 A"/>
    <property type="chains" value="SG=1-249"/>
</dbReference>
<dbReference type="PDB" id="8OZ0">
    <property type="method" value="EM"/>
    <property type="resolution" value="3.50 A"/>
    <property type="chains" value="S=1-249"/>
</dbReference>
<dbReference type="PDB" id="8PJ1">
    <property type="method" value="EM"/>
    <property type="resolution" value="3.40 A"/>
    <property type="chains" value="S=1-249"/>
</dbReference>
<dbReference type="PDB" id="8PJ2">
    <property type="method" value="EM"/>
    <property type="resolution" value="3.40 A"/>
    <property type="chains" value="S=1-249"/>
</dbReference>
<dbReference type="PDB" id="8PJ3">
    <property type="method" value="EM"/>
    <property type="resolution" value="3.70 A"/>
    <property type="chains" value="S=1-249"/>
</dbReference>
<dbReference type="PDB" id="8PJ4">
    <property type="method" value="EM"/>
    <property type="resolution" value="3.20 A"/>
    <property type="chains" value="S=1-249"/>
</dbReference>
<dbReference type="PDB" id="8PJ5">
    <property type="method" value="EM"/>
    <property type="resolution" value="2.90 A"/>
    <property type="chains" value="S=1-249"/>
</dbReference>
<dbReference type="PDB" id="8PJ6">
    <property type="method" value="EM"/>
    <property type="resolution" value="2.90 A"/>
    <property type="chains" value="S=1-249"/>
</dbReference>
<dbReference type="PDB" id="8PPK">
    <property type="method" value="EM"/>
    <property type="resolution" value="2.98 A"/>
    <property type="chains" value="G=1-249"/>
</dbReference>
<dbReference type="PDB" id="8PPL">
    <property type="method" value="EM"/>
    <property type="resolution" value="2.65 A"/>
    <property type="chains" value="AG=1-249"/>
</dbReference>
<dbReference type="PDB" id="8QOI">
    <property type="method" value="EM"/>
    <property type="resolution" value="1.90 A"/>
    <property type="chains" value="SG=1-249"/>
</dbReference>
<dbReference type="PDB" id="8T4S">
    <property type="method" value="EM"/>
    <property type="resolution" value="2.60 A"/>
    <property type="chains" value="G=1-249"/>
</dbReference>
<dbReference type="PDB" id="8UKB">
    <property type="method" value="EM"/>
    <property type="resolution" value="3.05 A"/>
    <property type="chains" value="SG=1-237"/>
</dbReference>
<dbReference type="PDB" id="8XP2">
    <property type="method" value="EM"/>
    <property type="resolution" value="3.20 A"/>
    <property type="chains" value="SG=1-249"/>
</dbReference>
<dbReference type="PDB" id="8XP3">
    <property type="method" value="EM"/>
    <property type="resolution" value="3.40 A"/>
    <property type="chains" value="SG=1-249"/>
</dbReference>
<dbReference type="PDB" id="8XSX">
    <property type="method" value="EM"/>
    <property type="resolution" value="2.40 A"/>
    <property type="chains" value="SG=1-249"/>
</dbReference>
<dbReference type="PDB" id="8XSY">
    <property type="method" value="EM"/>
    <property type="resolution" value="3.00 A"/>
    <property type="chains" value="SG=1-249"/>
</dbReference>
<dbReference type="PDB" id="8XSZ">
    <property type="method" value="EM"/>
    <property type="resolution" value="3.20 A"/>
    <property type="chains" value="SG=1-249"/>
</dbReference>
<dbReference type="PDB" id="8XXL">
    <property type="method" value="EM"/>
    <property type="resolution" value="2.90 A"/>
    <property type="chains" value="SG=1-249"/>
</dbReference>
<dbReference type="PDB" id="8XXM">
    <property type="method" value="EM"/>
    <property type="resolution" value="3.20 A"/>
    <property type="chains" value="SG=1-249"/>
</dbReference>
<dbReference type="PDB" id="8XXN">
    <property type="method" value="EM"/>
    <property type="resolution" value="3.60 A"/>
    <property type="chains" value="SG=1-249"/>
</dbReference>
<dbReference type="PDB" id="8Y0W">
    <property type="method" value="EM"/>
    <property type="resolution" value="3.40 A"/>
    <property type="chains" value="SG=1-249"/>
</dbReference>
<dbReference type="PDB" id="8Y0X">
    <property type="method" value="EM"/>
    <property type="resolution" value="3.30 A"/>
    <property type="chains" value="SG=1-249"/>
</dbReference>
<dbReference type="PDB" id="8YOO">
    <property type="method" value="EM"/>
    <property type="resolution" value="2.00 A"/>
    <property type="chains" value="SG=1-249"/>
</dbReference>
<dbReference type="PDB" id="8YOP">
    <property type="method" value="EM"/>
    <property type="resolution" value="2.20 A"/>
    <property type="chains" value="SG=1-249"/>
</dbReference>
<dbReference type="PDB" id="8ZDB">
    <property type="method" value="EM"/>
    <property type="resolution" value="3.60 A"/>
    <property type="chains" value="G=1-249"/>
</dbReference>
<dbReference type="PDB" id="8ZDC">
    <property type="method" value="EM"/>
    <property type="resolution" value="3.80 A"/>
    <property type="chains" value="G=1-249"/>
</dbReference>
<dbReference type="PDB" id="8ZDD">
    <property type="method" value="EM"/>
    <property type="resolution" value="3.70 A"/>
    <property type="chains" value="G=1-249"/>
</dbReference>
<dbReference type="PDB" id="9BKD">
    <property type="method" value="EM"/>
    <property type="resolution" value="2.60 A"/>
    <property type="chains" value="S=1-249"/>
</dbReference>
<dbReference type="PDB" id="9BLN">
    <property type="method" value="EM"/>
    <property type="resolution" value="3.90 A"/>
    <property type="chains" value="S=1-249"/>
</dbReference>
<dbReference type="PDB" id="9C3H">
    <property type="method" value="EM"/>
    <property type="resolution" value="2.00 A"/>
    <property type="chains" value="SG=1-249"/>
</dbReference>
<dbReference type="PDB" id="9G8M">
    <property type="method" value="EM"/>
    <property type="resolution" value="3.30 A"/>
    <property type="chains" value="SG=1-249"/>
</dbReference>
<dbReference type="PDB" id="9G8O">
    <property type="method" value="EM"/>
    <property type="resolution" value="3.40 A"/>
    <property type="chains" value="SG=1-249"/>
</dbReference>
<dbReference type="PDBsum" id="4UG0"/>
<dbReference type="PDBsum" id="4V6X"/>
<dbReference type="PDBsum" id="5A2Q"/>
<dbReference type="PDBsum" id="5AJ0"/>
<dbReference type="PDBsum" id="5FLX"/>
<dbReference type="PDBsum" id="5LKS"/>
<dbReference type="PDBsum" id="5OA3"/>
<dbReference type="PDBsum" id="5T2C"/>
<dbReference type="PDBsum" id="5VYC"/>
<dbReference type="PDBsum" id="6F4P"/>
<dbReference type="PDBsum" id="6F4Q"/>
<dbReference type="PDBsum" id="6FEC"/>
<dbReference type="PDBsum" id="6G18"/>
<dbReference type="PDBsum" id="6G4S"/>
<dbReference type="PDBsum" id="6G4W"/>
<dbReference type="PDBsum" id="6G51"/>
<dbReference type="PDBsum" id="6G53"/>
<dbReference type="PDBsum" id="6G5H"/>
<dbReference type="PDBsum" id="6G5I"/>
<dbReference type="PDBsum" id="6IP5"/>
<dbReference type="PDBsum" id="6IP6"/>
<dbReference type="PDBsum" id="6IP8"/>
<dbReference type="PDBsum" id="6OLE"/>
<dbReference type="PDBsum" id="6OLF"/>
<dbReference type="PDBsum" id="6OLG"/>
<dbReference type="PDBsum" id="6OLI"/>
<dbReference type="PDBsum" id="6OLZ"/>
<dbReference type="PDBsum" id="6OM0"/>
<dbReference type="PDBsum" id="6OM7"/>
<dbReference type="PDBsum" id="6QZP"/>
<dbReference type="PDBsum" id="6XA1"/>
<dbReference type="PDBsum" id="6Y0G"/>
<dbReference type="PDBsum" id="6Y2L"/>
<dbReference type="PDBsum" id="6Y57"/>
<dbReference type="PDBsum" id="6YBW"/>
<dbReference type="PDBsum" id="6Z6L"/>
<dbReference type="PDBsum" id="6Z6M"/>
<dbReference type="PDBsum" id="6Z6N"/>
<dbReference type="PDBsum" id="6ZLW"/>
<dbReference type="PDBsum" id="6ZM7"/>
<dbReference type="PDBsum" id="6ZME"/>
<dbReference type="PDBsum" id="6ZMI"/>
<dbReference type="PDBsum" id="6ZMO"/>
<dbReference type="PDBsum" id="6ZMT"/>
<dbReference type="PDBsum" id="6ZMW"/>
<dbReference type="PDBsum" id="6ZN5"/>
<dbReference type="PDBsum" id="6ZOJ"/>
<dbReference type="PDBsum" id="6ZOK"/>
<dbReference type="PDBsum" id="6ZON"/>
<dbReference type="PDBsum" id="6ZP4"/>
<dbReference type="PDBsum" id="6ZUO"/>
<dbReference type="PDBsum" id="6ZV6"/>
<dbReference type="PDBsum" id="6ZVH"/>
<dbReference type="PDBsum" id="6ZVJ"/>
<dbReference type="PDBsum" id="6ZXD"/>
<dbReference type="PDBsum" id="6ZXE"/>
<dbReference type="PDBsum" id="6ZXF"/>
<dbReference type="PDBsum" id="6ZXG"/>
<dbReference type="PDBsum" id="6ZXH"/>
<dbReference type="PDBsum" id="7A09"/>
<dbReference type="PDBsum" id="7K5I"/>
<dbReference type="PDBsum" id="7MQ8"/>
<dbReference type="PDBsum" id="7MQ9"/>
<dbReference type="PDBsum" id="7MQA"/>
<dbReference type="PDBsum" id="7QP6"/>
<dbReference type="PDBsum" id="7QP7"/>
<dbReference type="PDBsum" id="7QVP"/>
<dbReference type="PDBsum" id="7R4X"/>
<dbReference type="PDBsum" id="7TQL"/>
<dbReference type="PDBsum" id="7WTS"/>
<dbReference type="PDBsum" id="7WTT"/>
<dbReference type="PDBsum" id="7WTU"/>
<dbReference type="PDBsum" id="7WTV"/>
<dbReference type="PDBsum" id="7WTW"/>
<dbReference type="PDBsum" id="7WTX"/>
<dbReference type="PDBsum" id="7WTZ"/>
<dbReference type="PDBsum" id="7WU0"/>
<dbReference type="PDBsum" id="7XNX"/>
<dbReference type="PDBsum" id="7XNY"/>
<dbReference type="PDBsum" id="7ZJW"/>
<dbReference type="PDBsum" id="7ZJX"/>
<dbReference type="PDBsum" id="8G5Y"/>
<dbReference type="PDBsum" id="8G5Z"/>
<dbReference type="PDBsum" id="8G60"/>
<dbReference type="PDBsum" id="8G61"/>
<dbReference type="PDBsum" id="8G6J"/>
<dbReference type="PDBsum" id="8GLP"/>
<dbReference type="PDBsum" id="8IFD"/>
<dbReference type="PDBsum" id="8IFE"/>
<dbReference type="PDBsum" id="8JDJ"/>
<dbReference type="PDBsum" id="8JDK"/>
<dbReference type="PDBsum" id="8JDL"/>
<dbReference type="PDBsum" id="8JDM"/>
<dbReference type="PDBsum" id="8K2C"/>
<dbReference type="PDBsum" id="8OZ0"/>
<dbReference type="PDBsum" id="8PJ1"/>
<dbReference type="PDBsum" id="8PJ2"/>
<dbReference type="PDBsum" id="8PJ3"/>
<dbReference type="PDBsum" id="8PJ4"/>
<dbReference type="PDBsum" id="8PJ5"/>
<dbReference type="PDBsum" id="8PJ6"/>
<dbReference type="PDBsum" id="8PPK"/>
<dbReference type="PDBsum" id="8PPL"/>
<dbReference type="PDBsum" id="8QOI"/>
<dbReference type="PDBsum" id="8T4S"/>
<dbReference type="PDBsum" id="8UKB"/>
<dbReference type="PDBsum" id="8XP2"/>
<dbReference type="PDBsum" id="8XP3"/>
<dbReference type="PDBsum" id="8XSX"/>
<dbReference type="PDBsum" id="8XSY"/>
<dbReference type="PDBsum" id="8XSZ"/>
<dbReference type="PDBsum" id="8XXL"/>
<dbReference type="PDBsum" id="8XXM"/>
<dbReference type="PDBsum" id="8XXN"/>
<dbReference type="PDBsum" id="8Y0W"/>
<dbReference type="PDBsum" id="8Y0X"/>
<dbReference type="PDBsum" id="8YOO"/>
<dbReference type="PDBsum" id="8YOP"/>
<dbReference type="PDBsum" id="8ZDB"/>
<dbReference type="PDBsum" id="8ZDC"/>
<dbReference type="PDBsum" id="8ZDD"/>
<dbReference type="PDBsum" id="9BKD"/>
<dbReference type="PDBsum" id="9BLN"/>
<dbReference type="PDBsum" id="9C3H"/>
<dbReference type="PDBsum" id="9G8M"/>
<dbReference type="PDBsum" id="9G8O"/>
<dbReference type="EMDB" id="EMD-10668"/>
<dbReference type="EMDB" id="EMD-10674"/>
<dbReference type="EMDB" id="EMD-10690"/>
<dbReference type="EMDB" id="EMD-10775"/>
<dbReference type="EMDB" id="EMD-11098"/>
<dbReference type="EMDB" id="EMD-11099"/>
<dbReference type="EMDB" id="EMD-11100"/>
<dbReference type="EMDB" id="EMD-11276"/>
<dbReference type="EMDB" id="EMD-11288"/>
<dbReference type="EMDB" id="EMD-11289"/>
<dbReference type="EMDB" id="EMD-11292"/>
<dbReference type="EMDB" id="EMD-11299"/>
<dbReference type="EMDB" id="EMD-11301"/>
<dbReference type="EMDB" id="EMD-11302"/>
<dbReference type="EMDB" id="EMD-11310"/>
<dbReference type="EMDB" id="EMD-11320"/>
<dbReference type="EMDB" id="EMD-11321"/>
<dbReference type="EMDB" id="EMD-11325"/>
<dbReference type="EMDB" id="EMD-11335"/>
<dbReference type="EMDB" id="EMD-11440"/>
<dbReference type="EMDB" id="EMD-11441"/>
<dbReference type="EMDB" id="EMD-11456"/>
<dbReference type="EMDB" id="EMD-11458"/>
<dbReference type="EMDB" id="EMD-11517"/>
<dbReference type="EMDB" id="EMD-11518"/>
<dbReference type="EMDB" id="EMD-11519"/>
<dbReference type="EMDB" id="EMD-11520"/>
<dbReference type="EMDB" id="EMD-11521"/>
<dbReference type="EMDB" id="EMD-11602"/>
<dbReference type="EMDB" id="EMD-14113"/>
<dbReference type="EMDB" id="EMD-14114"/>
<dbReference type="EMDB" id="EMD-14181"/>
<dbReference type="EMDB" id="EMD-14317"/>
<dbReference type="EMDB" id="EMD-14751"/>
<dbReference type="EMDB" id="EMD-14752"/>
<dbReference type="EMDB" id="EMD-17297"/>
<dbReference type="EMDB" id="EMD-17696"/>
<dbReference type="EMDB" id="EMD-17697"/>
<dbReference type="EMDB" id="EMD-17698"/>
<dbReference type="EMDB" id="EMD-17699"/>
<dbReference type="EMDB" id="EMD-17700"/>
<dbReference type="EMDB" id="EMD-17701"/>
<dbReference type="EMDB" id="EMD-17804"/>
<dbReference type="EMDB" id="EMD-17805"/>
<dbReference type="EMDB" id="EMD-18539"/>
<dbReference type="EMDB" id="EMD-22681"/>
<dbReference type="EMDB" id="EMD-23936"/>
<dbReference type="EMDB" id="EMD-23937"/>
<dbReference type="EMDB" id="EMD-23938"/>
<dbReference type="EMDB" id="EMD-26067"/>
<dbReference type="EMDB" id="EMD-29757"/>
<dbReference type="EMDB" id="EMD-29758"/>
<dbReference type="EMDB" id="EMD-29759"/>
<dbReference type="EMDB" id="EMD-29760"/>
<dbReference type="EMDB" id="EMD-29771"/>
<dbReference type="EMDB" id="EMD-32799"/>
<dbReference type="EMDB" id="EMD-32800"/>
<dbReference type="EMDB" id="EMD-32801"/>
<dbReference type="EMDB" id="EMD-32802"/>
<dbReference type="EMDB" id="EMD-32803"/>
<dbReference type="EMDB" id="EMD-32804"/>
<dbReference type="EMDB" id="EMD-32806"/>
<dbReference type="EMDB" id="EMD-32807"/>
<dbReference type="EMDB" id="EMD-33329"/>
<dbReference type="EMDB" id="EMD-33330"/>
<dbReference type="EMDB" id="EMD-35413"/>
<dbReference type="EMDB" id="EMD-35414"/>
<dbReference type="EMDB" id="EMD-36178"/>
<dbReference type="EMDB" id="EMD-36179"/>
<dbReference type="EMDB" id="EMD-36180"/>
<dbReference type="EMDB" id="EMD-36181"/>
<dbReference type="EMDB" id="EMD-36838"/>
<dbReference type="EMDB" id="EMD-3770"/>
<dbReference type="EMDB" id="EMD-38548"/>
<dbReference type="EMDB" id="EMD-38549"/>
<dbReference type="EMDB" id="EMD-38629"/>
<dbReference type="EMDB" id="EMD-38630"/>
<dbReference type="EMDB" id="EMD-38631"/>
<dbReference type="EMDB" id="EMD-38752"/>
<dbReference type="EMDB" id="EMD-38753"/>
<dbReference type="EMDB" id="EMD-38754"/>
<dbReference type="EMDB" id="EMD-3883"/>
<dbReference type="EMDB" id="EMD-39455"/>
<dbReference type="EMDB" id="EMD-39456"/>
<dbReference type="EMDB" id="EMD-39956"/>
<dbReference type="EMDB" id="EMD-39957"/>
<dbReference type="EMDB" id="EMD-39958"/>
<dbReference type="EMDB" id="EMD-40205"/>
<dbReference type="EMDB" id="EMD-4070"/>
<dbReference type="EMDB" id="EMD-41039"/>
<dbReference type="EMDB" id="EMD-42351"/>
<dbReference type="EMDB" id="EMD-4242"/>
<dbReference type="EMDB" id="EMD-4337"/>
<dbReference type="EMDB" id="EMD-4348"/>
<dbReference type="EMDB" id="EMD-4349"/>
<dbReference type="EMDB" id="EMD-4350"/>
<dbReference type="EMDB" id="EMD-4351"/>
<dbReference type="EMDB" id="EMD-4352"/>
<dbReference type="EMDB" id="EMD-4353"/>
<dbReference type="EMDB" id="EMD-44641"/>
<dbReference type="EMDB" id="EMD-44671"/>
<dbReference type="EMDB" id="EMD-45170"/>
<dbReference type="EMDB" id="EMD-51132"/>
<dbReference type="EMDB" id="EMD-51134"/>
<dbReference type="EMDB" id="EMD-9701"/>
<dbReference type="EMDB" id="EMD-9702"/>
<dbReference type="EMDB" id="EMD-9703"/>
<dbReference type="SMR" id="P62753"/>
<dbReference type="BioGRID" id="112108">
    <property type="interactions" value="893"/>
</dbReference>
<dbReference type="ComplexPortal" id="CPX-5223">
    <property type="entry name" value="40S cytosolic small ribosomal subunit"/>
</dbReference>
<dbReference type="CORUM" id="P62753"/>
<dbReference type="DIP" id="DIP-31507N"/>
<dbReference type="FunCoup" id="P62753">
    <property type="interactions" value="2834"/>
</dbReference>
<dbReference type="IntAct" id="P62753">
    <property type="interactions" value="520"/>
</dbReference>
<dbReference type="MINT" id="P62753"/>
<dbReference type="STRING" id="9606.ENSP00000369757"/>
<dbReference type="ChEMBL" id="CHEMBL3351215"/>
<dbReference type="DrugBank" id="DB11638">
    <property type="generic name" value="Artenimol"/>
</dbReference>
<dbReference type="GlyGen" id="P62753">
    <property type="glycosylation" value="4 sites, 1 N-linked glycan (1 site), 1 O-linked glycan (1 site)"/>
</dbReference>
<dbReference type="iPTMnet" id="P62753"/>
<dbReference type="MetOSite" id="P62753"/>
<dbReference type="PhosphoSitePlus" id="P62753"/>
<dbReference type="SwissPalm" id="P62753"/>
<dbReference type="BioMuta" id="RPS6"/>
<dbReference type="DMDM" id="51338632"/>
<dbReference type="CPTAC" id="CPTAC-1331"/>
<dbReference type="CPTAC" id="CPTAC-1332"/>
<dbReference type="CPTAC" id="CPTAC-1333"/>
<dbReference type="jPOST" id="P62753"/>
<dbReference type="MassIVE" id="P62753"/>
<dbReference type="PaxDb" id="9606-ENSP00000369757"/>
<dbReference type="PeptideAtlas" id="P62753"/>
<dbReference type="ProteomicsDB" id="57422"/>
<dbReference type="Pumba" id="P62753"/>
<dbReference type="TopDownProteomics" id="P62753"/>
<dbReference type="Antibodypedia" id="3412">
    <property type="antibodies" value="1314 antibodies from 47 providers"/>
</dbReference>
<dbReference type="DNASU" id="6194"/>
<dbReference type="Ensembl" id="ENST00000380394.9">
    <property type="protein sequence ID" value="ENSP00000369757.4"/>
    <property type="gene ID" value="ENSG00000137154.13"/>
</dbReference>
<dbReference type="GeneID" id="6194"/>
<dbReference type="KEGG" id="hsa:6194"/>
<dbReference type="MANE-Select" id="ENST00000380394.9">
    <property type="protein sequence ID" value="ENSP00000369757.4"/>
    <property type="RefSeq nucleotide sequence ID" value="NM_001010.3"/>
    <property type="RefSeq protein sequence ID" value="NP_001001.2"/>
</dbReference>
<dbReference type="UCSC" id="uc003znv.2">
    <property type="organism name" value="human"/>
</dbReference>
<dbReference type="AGR" id="HGNC:10429"/>
<dbReference type="CTD" id="6194"/>
<dbReference type="DisGeNET" id="6194"/>
<dbReference type="GeneCards" id="RPS6"/>
<dbReference type="HGNC" id="HGNC:10429">
    <property type="gene designation" value="RPS6"/>
</dbReference>
<dbReference type="HPA" id="ENSG00000137154">
    <property type="expression patterns" value="Low tissue specificity"/>
</dbReference>
<dbReference type="MIM" id="180460">
    <property type="type" value="gene"/>
</dbReference>
<dbReference type="neXtProt" id="NX_P62753"/>
<dbReference type="OpenTargets" id="ENSG00000137154"/>
<dbReference type="PharmGKB" id="PA34844"/>
<dbReference type="VEuPathDB" id="HostDB:ENSG00000137154"/>
<dbReference type="eggNOG" id="KOG1646">
    <property type="taxonomic scope" value="Eukaryota"/>
</dbReference>
<dbReference type="GeneTree" id="ENSGT00390000009819"/>
<dbReference type="HOGENOM" id="CLU_046346_0_1_1"/>
<dbReference type="InParanoid" id="P62753"/>
<dbReference type="OMA" id="KPRYKAP"/>
<dbReference type="OrthoDB" id="9530936at2759"/>
<dbReference type="PAN-GO" id="P62753">
    <property type="GO annotations" value="0 GO annotations based on evolutionary models"/>
</dbReference>
<dbReference type="PhylomeDB" id="P62753"/>
<dbReference type="TreeFam" id="TF300035"/>
<dbReference type="PathwayCommons" id="P62753"/>
<dbReference type="Reactome" id="R-HSA-156827">
    <property type="pathway name" value="L13a-mediated translational silencing of Ceruloplasmin expression"/>
</dbReference>
<dbReference type="Reactome" id="R-HSA-156902">
    <property type="pathway name" value="Peptide chain elongation"/>
</dbReference>
<dbReference type="Reactome" id="R-HSA-166208">
    <property type="pathway name" value="mTORC1-mediated signalling"/>
</dbReference>
<dbReference type="Reactome" id="R-HSA-1799339">
    <property type="pathway name" value="SRP-dependent cotranslational protein targeting to membrane"/>
</dbReference>
<dbReference type="Reactome" id="R-HSA-192823">
    <property type="pathway name" value="Viral mRNA Translation"/>
</dbReference>
<dbReference type="Reactome" id="R-HSA-2408557">
    <property type="pathway name" value="Selenocysteine synthesis"/>
</dbReference>
<dbReference type="Reactome" id="R-HSA-6790901">
    <property type="pathway name" value="rRNA modification in the nucleus and cytosol"/>
</dbReference>
<dbReference type="Reactome" id="R-HSA-6791226">
    <property type="pathway name" value="Major pathway of rRNA processing in the nucleolus and cytosol"/>
</dbReference>
<dbReference type="Reactome" id="R-HSA-72649">
    <property type="pathway name" value="Translation initiation complex formation"/>
</dbReference>
<dbReference type="Reactome" id="R-HSA-72689">
    <property type="pathway name" value="Formation of a pool of free 40S subunits"/>
</dbReference>
<dbReference type="Reactome" id="R-HSA-72695">
    <property type="pathway name" value="Formation of the ternary complex, and subsequently, the 43S complex"/>
</dbReference>
<dbReference type="Reactome" id="R-HSA-72702">
    <property type="pathway name" value="Ribosomal scanning and start codon recognition"/>
</dbReference>
<dbReference type="Reactome" id="R-HSA-72706">
    <property type="pathway name" value="GTP hydrolysis and joining of the 60S ribosomal subunit"/>
</dbReference>
<dbReference type="Reactome" id="R-HSA-72764">
    <property type="pathway name" value="Eukaryotic Translation Termination"/>
</dbReference>
<dbReference type="Reactome" id="R-HSA-9010553">
    <property type="pathway name" value="Regulation of expression of SLITs and ROBOs"/>
</dbReference>
<dbReference type="Reactome" id="R-HSA-9629569">
    <property type="pathway name" value="Protein hydroxylation"/>
</dbReference>
<dbReference type="Reactome" id="R-HSA-9633012">
    <property type="pathway name" value="Response of EIF2AK4 (GCN2) to amino acid deficiency"/>
</dbReference>
<dbReference type="Reactome" id="R-HSA-9725371">
    <property type="pathway name" value="Nuclear events stimulated by ALK signaling in cancer"/>
</dbReference>
<dbReference type="Reactome" id="R-HSA-9735869">
    <property type="pathway name" value="SARS-CoV-1 modulates host translation machinery"/>
</dbReference>
<dbReference type="Reactome" id="R-HSA-9754678">
    <property type="pathway name" value="SARS-CoV-2 modulates host translation machinery"/>
</dbReference>
<dbReference type="Reactome" id="R-HSA-975956">
    <property type="pathway name" value="Nonsense Mediated Decay (NMD) independent of the Exon Junction Complex (EJC)"/>
</dbReference>
<dbReference type="Reactome" id="R-HSA-975957">
    <property type="pathway name" value="Nonsense Mediated Decay (NMD) enhanced by the Exon Junction Complex (EJC)"/>
</dbReference>
<dbReference type="SABIO-RK" id="P62753"/>
<dbReference type="SignaLink" id="P62753"/>
<dbReference type="SIGNOR" id="P62753"/>
<dbReference type="BioGRID-ORCS" id="6194">
    <property type="hits" value="788 hits in 1134 CRISPR screens"/>
</dbReference>
<dbReference type="CD-CODE" id="232F8A39">
    <property type="entry name" value="P-body"/>
</dbReference>
<dbReference type="CD-CODE" id="91857CE7">
    <property type="entry name" value="Nucleolus"/>
</dbReference>
<dbReference type="CD-CODE" id="DEE660B4">
    <property type="entry name" value="Stress granule"/>
</dbReference>
<dbReference type="ChiTaRS" id="RPS6">
    <property type="organism name" value="human"/>
</dbReference>
<dbReference type="GenomeRNAi" id="6194"/>
<dbReference type="Pharos" id="P62753">
    <property type="development level" value="Tbio"/>
</dbReference>
<dbReference type="PRO" id="PR:P62753"/>
<dbReference type="Proteomes" id="UP000005640">
    <property type="component" value="Chromosome 9"/>
</dbReference>
<dbReference type="RNAct" id="P62753">
    <property type="molecule type" value="protein"/>
</dbReference>
<dbReference type="Bgee" id="ENSG00000137154">
    <property type="expression patterns" value="Expressed in skin of hip and 213 other cell types or tissues"/>
</dbReference>
<dbReference type="ExpressionAtlas" id="P62753">
    <property type="expression patterns" value="baseline and differential"/>
</dbReference>
<dbReference type="GO" id="GO:0044297">
    <property type="term" value="C:cell body"/>
    <property type="evidence" value="ECO:0000314"/>
    <property type="project" value="ParkinsonsUK-UCL"/>
</dbReference>
<dbReference type="GO" id="GO:0005737">
    <property type="term" value="C:cytoplasm"/>
    <property type="evidence" value="ECO:0000303"/>
    <property type="project" value="ComplexPortal"/>
</dbReference>
<dbReference type="GO" id="GO:0036464">
    <property type="term" value="C:cytoplasmic ribonucleoprotein granule"/>
    <property type="evidence" value="ECO:0000314"/>
    <property type="project" value="ParkinsonsUK-UCL"/>
</dbReference>
<dbReference type="GO" id="GO:0005829">
    <property type="term" value="C:cytosol"/>
    <property type="evidence" value="ECO:0000314"/>
    <property type="project" value="HPA"/>
</dbReference>
<dbReference type="GO" id="GO:0022626">
    <property type="term" value="C:cytosolic ribosome"/>
    <property type="evidence" value="ECO:0000314"/>
    <property type="project" value="FlyBase"/>
</dbReference>
<dbReference type="GO" id="GO:0022627">
    <property type="term" value="C:cytosolic small ribosomal subunit"/>
    <property type="evidence" value="ECO:0000314"/>
    <property type="project" value="UniProtKB"/>
</dbReference>
<dbReference type="GO" id="GO:0030425">
    <property type="term" value="C:dendrite"/>
    <property type="evidence" value="ECO:0000314"/>
    <property type="project" value="ParkinsonsUK-UCL"/>
</dbReference>
<dbReference type="GO" id="GO:0005783">
    <property type="term" value="C:endoplasmic reticulum"/>
    <property type="evidence" value="ECO:0000314"/>
    <property type="project" value="HPA"/>
</dbReference>
<dbReference type="GO" id="GO:0098982">
    <property type="term" value="C:GABA-ergic synapse"/>
    <property type="evidence" value="ECO:0007669"/>
    <property type="project" value="Ensembl"/>
</dbReference>
<dbReference type="GO" id="GO:0016020">
    <property type="term" value="C:membrane"/>
    <property type="evidence" value="ECO:0007005"/>
    <property type="project" value="UniProtKB"/>
</dbReference>
<dbReference type="GO" id="GO:0005730">
    <property type="term" value="C:nucleolus"/>
    <property type="evidence" value="ECO:0000314"/>
    <property type="project" value="UniProtKB"/>
</dbReference>
<dbReference type="GO" id="GO:0005654">
    <property type="term" value="C:nucleoplasm"/>
    <property type="evidence" value="ECO:0000304"/>
    <property type="project" value="Reactome"/>
</dbReference>
<dbReference type="GO" id="GO:0005634">
    <property type="term" value="C:nucleus"/>
    <property type="evidence" value="ECO:0000314"/>
    <property type="project" value="UniProtKB"/>
</dbReference>
<dbReference type="GO" id="GO:0098793">
    <property type="term" value="C:presynapse"/>
    <property type="evidence" value="ECO:0007669"/>
    <property type="project" value="Ensembl"/>
</dbReference>
<dbReference type="GO" id="GO:1990904">
    <property type="term" value="C:ribonucleoprotein complex"/>
    <property type="evidence" value="ECO:0000314"/>
    <property type="project" value="MGI"/>
</dbReference>
<dbReference type="GO" id="GO:0015935">
    <property type="term" value="C:small ribosomal subunit"/>
    <property type="evidence" value="ECO:0000314"/>
    <property type="project" value="UniProtKB"/>
</dbReference>
<dbReference type="GO" id="GO:0032040">
    <property type="term" value="C:small-subunit processome"/>
    <property type="evidence" value="ECO:0000314"/>
    <property type="project" value="UniProtKB"/>
</dbReference>
<dbReference type="GO" id="GO:0003729">
    <property type="term" value="F:mRNA binding"/>
    <property type="evidence" value="ECO:0007669"/>
    <property type="project" value="Ensembl"/>
</dbReference>
<dbReference type="GO" id="GO:0019901">
    <property type="term" value="F:protein kinase binding"/>
    <property type="evidence" value="ECO:0000353"/>
    <property type="project" value="UniProtKB"/>
</dbReference>
<dbReference type="GO" id="GO:0003723">
    <property type="term" value="F:RNA binding"/>
    <property type="evidence" value="ECO:0007005"/>
    <property type="project" value="UniProtKB"/>
</dbReference>
<dbReference type="GO" id="GO:0003735">
    <property type="term" value="F:structural constituent of ribosome"/>
    <property type="evidence" value="ECO:0000314"/>
    <property type="project" value="UniProtKB"/>
</dbReference>
<dbReference type="GO" id="GO:0071361">
    <property type="term" value="P:cellular response to ethanol"/>
    <property type="evidence" value="ECO:0007669"/>
    <property type="project" value="Ensembl"/>
</dbReference>
<dbReference type="GO" id="GO:0002181">
    <property type="term" value="P:cytoplasmic translation"/>
    <property type="evidence" value="ECO:0000314"/>
    <property type="project" value="UniProtKB"/>
</dbReference>
<dbReference type="GO" id="GO:0042593">
    <property type="term" value="P:glucose homeostasis"/>
    <property type="evidence" value="ECO:0000250"/>
    <property type="project" value="UniProtKB"/>
</dbReference>
<dbReference type="GO" id="GO:1903347">
    <property type="term" value="P:negative regulation of bicellular tight junction assembly"/>
    <property type="evidence" value="ECO:0007669"/>
    <property type="project" value="Ensembl"/>
</dbReference>
<dbReference type="GO" id="GO:0043065">
    <property type="term" value="P:positive regulation of apoptotic process"/>
    <property type="evidence" value="ECO:0000314"/>
    <property type="project" value="UniProtKB"/>
</dbReference>
<dbReference type="GO" id="GO:0008284">
    <property type="term" value="P:positive regulation of cell population proliferation"/>
    <property type="evidence" value="ECO:0000315"/>
    <property type="project" value="UniProtKB"/>
</dbReference>
<dbReference type="GO" id="GO:0032868">
    <property type="term" value="P:response to insulin"/>
    <property type="evidence" value="ECO:0007669"/>
    <property type="project" value="Ensembl"/>
</dbReference>
<dbReference type="GO" id="GO:0000028">
    <property type="term" value="P:ribosomal small subunit assembly"/>
    <property type="evidence" value="ECO:0007669"/>
    <property type="project" value="Ensembl"/>
</dbReference>
<dbReference type="GO" id="GO:0042274">
    <property type="term" value="P:ribosomal small subunit biogenesis"/>
    <property type="evidence" value="ECO:0000314"/>
    <property type="project" value="UniProtKB"/>
</dbReference>
<dbReference type="GO" id="GO:0006364">
    <property type="term" value="P:rRNA processing"/>
    <property type="evidence" value="ECO:0000315"/>
    <property type="project" value="UniProtKB"/>
</dbReference>
<dbReference type="GO" id="GO:0031929">
    <property type="term" value="P:TOR signaling"/>
    <property type="evidence" value="ECO:0000314"/>
    <property type="project" value="UniProtKB"/>
</dbReference>
<dbReference type="GO" id="GO:0006412">
    <property type="term" value="P:translation"/>
    <property type="evidence" value="ECO:0000305"/>
    <property type="project" value="UniProtKB"/>
</dbReference>
<dbReference type="FunFam" id="1.20.5.2650:FF:000001">
    <property type="entry name" value="40S ribosomal protein S6"/>
    <property type="match status" value="1"/>
</dbReference>
<dbReference type="Gene3D" id="1.20.5.2650">
    <property type="match status" value="1"/>
</dbReference>
<dbReference type="InterPro" id="IPR001377">
    <property type="entry name" value="Ribosomal_eS6"/>
</dbReference>
<dbReference type="InterPro" id="IPR014401">
    <property type="entry name" value="Ribosomal_eS6-like"/>
</dbReference>
<dbReference type="InterPro" id="IPR018282">
    <property type="entry name" value="Ribosomal_eS6_CS"/>
</dbReference>
<dbReference type="PANTHER" id="PTHR11502">
    <property type="entry name" value="40S RIBOSOMAL PROTEIN S6"/>
    <property type="match status" value="1"/>
</dbReference>
<dbReference type="Pfam" id="PF01092">
    <property type="entry name" value="Ribosomal_S6e"/>
    <property type="match status" value="1"/>
</dbReference>
<dbReference type="PIRSF" id="PIRSF002129">
    <property type="entry name" value="Ribosom_S6_euk"/>
    <property type="match status" value="1"/>
</dbReference>
<dbReference type="SMART" id="SM01405">
    <property type="entry name" value="Ribosomal_S6e"/>
    <property type="match status" value="1"/>
</dbReference>
<dbReference type="PROSITE" id="PS00578">
    <property type="entry name" value="RIBOSOMAL_S6E"/>
    <property type="match status" value="1"/>
</dbReference>
<gene>
    <name evidence="13 15" type="primary">RPS6</name>
    <name type="ORF">OK/SW-cl.2</name>
</gene>
<evidence type="ECO:0000256" key="1">
    <source>
        <dbReference type="SAM" id="MobiDB-lite"/>
    </source>
</evidence>
<evidence type="ECO:0000269" key="2">
    <source>
    </source>
</evidence>
<evidence type="ECO:0000269" key="3">
    <source>
    </source>
</evidence>
<evidence type="ECO:0000269" key="4">
    <source>
    </source>
</evidence>
<evidence type="ECO:0000269" key="5">
    <source>
    </source>
</evidence>
<evidence type="ECO:0000269" key="6">
    <source>
    </source>
</evidence>
<evidence type="ECO:0000269" key="7">
    <source>
    </source>
</evidence>
<evidence type="ECO:0000269" key="8">
    <source>
    </source>
</evidence>
<evidence type="ECO:0000269" key="9">
    <source>
    </source>
</evidence>
<evidence type="ECO:0000269" key="10">
    <source>
    </source>
</evidence>
<evidence type="ECO:0000269" key="11">
    <source>
    </source>
</evidence>
<evidence type="ECO:0000303" key="12">
    <source>
    </source>
</evidence>
<evidence type="ECO:0000303" key="13">
    <source>
    </source>
</evidence>
<evidence type="ECO:0000305" key="14"/>
<evidence type="ECO:0000312" key="15">
    <source>
        <dbReference type="HGNC" id="HGNC:10429"/>
    </source>
</evidence>
<evidence type="ECO:0007744" key="16">
    <source>
        <dbReference type="PDB" id="7MQ8"/>
    </source>
</evidence>
<evidence type="ECO:0007744" key="17">
    <source>
        <dbReference type="PDB" id="7MQ9"/>
    </source>
</evidence>
<evidence type="ECO:0007744" key="18">
    <source>
        <dbReference type="PDB" id="7MQA"/>
    </source>
</evidence>
<evidence type="ECO:0007744" key="19">
    <source>
    </source>
</evidence>
<evidence type="ECO:0007744" key="20">
    <source>
    </source>
</evidence>
<evidence type="ECO:0007744" key="21">
    <source>
    </source>
</evidence>
<evidence type="ECO:0007744" key="22">
    <source>
    </source>
</evidence>
<evidence type="ECO:0007744" key="23">
    <source>
    </source>
</evidence>
<evidence type="ECO:0007744" key="24">
    <source>
    </source>
</evidence>
<evidence type="ECO:0007829" key="25">
    <source>
        <dbReference type="PDB" id="6YBW"/>
    </source>
</evidence>
<evidence type="ECO:0007829" key="26">
    <source>
        <dbReference type="PDB" id="6ZLW"/>
    </source>
</evidence>
<evidence type="ECO:0007829" key="27">
    <source>
        <dbReference type="PDB" id="6ZUO"/>
    </source>
</evidence>
<evidence type="ECO:0007829" key="28">
    <source>
        <dbReference type="PDB" id="6ZV6"/>
    </source>
</evidence>
<evidence type="ECO:0007829" key="29">
    <source>
        <dbReference type="PDB" id="6ZVH"/>
    </source>
</evidence>
<evidence type="ECO:0007829" key="30">
    <source>
        <dbReference type="PDB" id="7R4X"/>
    </source>
</evidence>
<evidence type="ECO:0007829" key="31">
    <source>
        <dbReference type="PDB" id="7WTS"/>
    </source>
</evidence>